<proteinExistence type="inferred from homology"/>
<gene>
    <name evidence="1" type="primary">gcvPB</name>
    <name type="ordered locus">TGAM_1700</name>
</gene>
<name>GCSPB_THEGJ</name>
<feature type="chain" id="PRO_1000212679" description="Probable glycine dehydrogenase (decarboxylating) subunit 2">
    <location>
        <begin position="1"/>
        <end position="502"/>
    </location>
</feature>
<feature type="modified residue" description="N6-(pyridoxal phosphate)lysine" evidence="1">
    <location>
        <position position="273"/>
    </location>
</feature>
<evidence type="ECO:0000255" key="1">
    <source>
        <dbReference type="HAMAP-Rule" id="MF_00713"/>
    </source>
</evidence>
<dbReference type="EC" id="1.4.4.2" evidence="1"/>
<dbReference type="EMBL" id="CP001398">
    <property type="protein sequence ID" value="ACS34202.1"/>
    <property type="molecule type" value="Genomic_DNA"/>
</dbReference>
<dbReference type="RefSeq" id="WP_015859312.1">
    <property type="nucleotide sequence ID" value="NC_012804.1"/>
</dbReference>
<dbReference type="SMR" id="C5A7J0"/>
<dbReference type="STRING" id="593117.TGAM_1700"/>
<dbReference type="PaxDb" id="593117-TGAM_1700"/>
<dbReference type="GeneID" id="7987419"/>
<dbReference type="KEGG" id="tga:TGAM_1700"/>
<dbReference type="PATRIC" id="fig|593117.10.peg.1707"/>
<dbReference type="eggNOG" id="arCOG00076">
    <property type="taxonomic scope" value="Archaea"/>
</dbReference>
<dbReference type="HOGENOM" id="CLU_004620_5_0_2"/>
<dbReference type="OrthoDB" id="371967at2157"/>
<dbReference type="Proteomes" id="UP000001488">
    <property type="component" value="Chromosome"/>
</dbReference>
<dbReference type="GO" id="GO:0005829">
    <property type="term" value="C:cytosol"/>
    <property type="evidence" value="ECO:0007669"/>
    <property type="project" value="TreeGrafter"/>
</dbReference>
<dbReference type="GO" id="GO:0005960">
    <property type="term" value="C:glycine cleavage complex"/>
    <property type="evidence" value="ECO:0007669"/>
    <property type="project" value="TreeGrafter"/>
</dbReference>
<dbReference type="GO" id="GO:0016594">
    <property type="term" value="F:glycine binding"/>
    <property type="evidence" value="ECO:0007669"/>
    <property type="project" value="TreeGrafter"/>
</dbReference>
<dbReference type="GO" id="GO:0004375">
    <property type="term" value="F:glycine dehydrogenase (decarboxylating) activity"/>
    <property type="evidence" value="ECO:0007669"/>
    <property type="project" value="UniProtKB-EC"/>
</dbReference>
<dbReference type="GO" id="GO:0030170">
    <property type="term" value="F:pyridoxal phosphate binding"/>
    <property type="evidence" value="ECO:0007669"/>
    <property type="project" value="TreeGrafter"/>
</dbReference>
<dbReference type="GO" id="GO:0019464">
    <property type="term" value="P:glycine decarboxylation via glycine cleavage system"/>
    <property type="evidence" value="ECO:0007669"/>
    <property type="project" value="UniProtKB-UniRule"/>
</dbReference>
<dbReference type="CDD" id="cd00613">
    <property type="entry name" value="GDC-P"/>
    <property type="match status" value="1"/>
</dbReference>
<dbReference type="FunFam" id="3.40.640.10:FF:000034">
    <property type="entry name" value="Probable glycine dehydrogenase (decarboxylating) subunit 2"/>
    <property type="match status" value="1"/>
</dbReference>
<dbReference type="FunFam" id="3.90.1150.10:FF:000014">
    <property type="entry name" value="Probable glycine dehydrogenase (decarboxylating) subunit 2"/>
    <property type="match status" value="1"/>
</dbReference>
<dbReference type="Gene3D" id="6.20.440.10">
    <property type="match status" value="1"/>
</dbReference>
<dbReference type="Gene3D" id="3.90.1150.10">
    <property type="entry name" value="Aspartate Aminotransferase, domain 1"/>
    <property type="match status" value="1"/>
</dbReference>
<dbReference type="Gene3D" id="3.40.640.10">
    <property type="entry name" value="Type I PLP-dependent aspartate aminotransferase-like (Major domain)"/>
    <property type="match status" value="1"/>
</dbReference>
<dbReference type="HAMAP" id="MF_00713">
    <property type="entry name" value="GcvPB"/>
    <property type="match status" value="1"/>
</dbReference>
<dbReference type="InterPro" id="IPR023012">
    <property type="entry name" value="GcvPB"/>
</dbReference>
<dbReference type="InterPro" id="IPR049316">
    <property type="entry name" value="GDC-P_C"/>
</dbReference>
<dbReference type="InterPro" id="IPR049315">
    <property type="entry name" value="GDC-P_N"/>
</dbReference>
<dbReference type="InterPro" id="IPR020581">
    <property type="entry name" value="GDC_P"/>
</dbReference>
<dbReference type="InterPro" id="IPR015424">
    <property type="entry name" value="PyrdxlP-dep_Trfase"/>
</dbReference>
<dbReference type="InterPro" id="IPR015421">
    <property type="entry name" value="PyrdxlP-dep_Trfase_major"/>
</dbReference>
<dbReference type="InterPro" id="IPR015422">
    <property type="entry name" value="PyrdxlP-dep_Trfase_small"/>
</dbReference>
<dbReference type="NCBIfam" id="NF003346">
    <property type="entry name" value="PRK04366.1"/>
    <property type="match status" value="1"/>
</dbReference>
<dbReference type="PANTHER" id="PTHR11773:SF1">
    <property type="entry name" value="GLYCINE DEHYDROGENASE (DECARBOXYLATING), MITOCHONDRIAL"/>
    <property type="match status" value="1"/>
</dbReference>
<dbReference type="PANTHER" id="PTHR11773">
    <property type="entry name" value="GLYCINE DEHYDROGENASE, DECARBOXYLATING"/>
    <property type="match status" value="1"/>
</dbReference>
<dbReference type="Pfam" id="PF21478">
    <property type="entry name" value="GcvP2_C"/>
    <property type="match status" value="1"/>
</dbReference>
<dbReference type="Pfam" id="PF02347">
    <property type="entry name" value="GDC-P"/>
    <property type="match status" value="1"/>
</dbReference>
<dbReference type="SUPFAM" id="SSF53383">
    <property type="entry name" value="PLP-dependent transferases"/>
    <property type="match status" value="1"/>
</dbReference>
<accession>C5A7J0</accession>
<keyword id="KW-0560">Oxidoreductase</keyword>
<keyword id="KW-0663">Pyridoxal phosphate</keyword>
<keyword id="KW-1185">Reference proteome</keyword>
<reference key="1">
    <citation type="journal article" date="2007" name="Genome Biol.">
        <title>Genome analysis and genome-wide proteomics of Thermococcus gammatolerans, the most radioresistant organism known amongst the Archaea.</title>
        <authorList>
            <person name="Zivanovic Y."/>
            <person name="Armengaud J."/>
            <person name="Lagorce A."/>
            <person name="Leplat C."/>
            <person name="Guerin P."/>
            <person name="Dutertre M."/>
            <person name="Anthouard V."/>
            <person name="Forterre P."/>
            <person name="Wincker P."/>
            <person name="Confalonieri F."/>
        </authorList>
    </citation>
    <scope>NUCLEOTIDE SEQUENCE [LARGE SCALE GENOMIC DNA]</scope>
    <source>
        <strain>DSM 15229 / JCM 11827 / EJ3</strain>
    </source>
</reference>
<sequence length="502" mass="56100">MFRQAKWDEPLIFELSREGRVGYTLPKPIEDLEVEIPEKIRRKSKLDLPELSEPEIVKHYTRLSEMNYGVDSGIYPLGSCTMKYNPKINEEMAAHPGVAYIHPYQDERTVQGALKIMWELEQWLKEITGMDRFTLQPAAGANGEFTGVSIIRTYHIDNGEPQRDEMLVPDSAHGTNPASAAMAGFKVIEIPSNENGTVDLEALENAVGERTAGLMLTNPNTLGIFEDEILEIAKIVHKAGGLLYYDGANLNAVLGKVRPGDMGFDIVHLNLHKTFSTPHGGGGPGSGPVGVKDFLKDYLPVPLVGYDEENDRYYLDYNVPKSIGKVKELYGNFAVMVRALVYLKVMGRDGLKNASEIAVLNANYLTRKLLGTRGYELPGKKLRKHETVFSAEPMKKETGVTAMDVAKRLLDFGMHAPTVYFPLIVHEALMIEPTETVSKEELDAYVEALKRISDEAYTNPEVVKSAPHNTAVRRVDDVMAVKKPVISWRMYLELKEKGEINY</sequence>
<protein>
    <recommendedName>
        <fullName evidence="1">Probable glycine dehydrogenase (decarboxylating) subunit 2</fullName>
        <ecNumber evidence="1">1.4.4.2</ecNumber>
    </recommendedName>
    <alternativeName>
        <fullName evidence="1">Glycine cleavage system P-protein subunit 2</fullName>
    </alternativeName>
    <alternativeName>
        <fullName evidence="1">Glycine decarboxylase subunit 2</fullName>
    </alternativeName>
    <alternativeName>
        <fullName evidence="1">Glycine dehydrogenase (aminomethyl-transferring) subunit 2</fullName>
    </alternativeName>
</protein>
<organism>
    <name type="scientific">Thermococcus gammatolerans (strain DSM 15229 / JCM 11827 / EJ3)</name>
    <dbReference type="NCBI Taxonomy" id="593117"/>
    <lineage>
        <taxon>Archaea</taxon>
        <taxon>Methanobacteriati</taxon>
        <taxon>Methanobacteriota</taxon>
        <taxon>Thermococci</taxon>
        <taxon>Thermococcales</taxon>
        <taxon>Thermococcaceae</taxon>
        <taxon>Thermococcus</taxon>
    </lineage>
</organism>
<comment type="function">
    <text evidence="1">The glycine cleavage system catalyzes the degradation of glycine. The P protein binds the alpha-amino group of glycine through its pyridoxal phosphate cofactor; CO(2) is released and the remaining methylamine moiety is then transferred to the lipoamide cofactor of the H protein.</text>
</comment>
<comment type="catalytic activity">
    <reaction evidence="1">
        <text>N(6)-[(R)-lipoyl]-L-lysyl-[glycine-cleavage complex H protein] + glycine + H(+) = N(6)-[(R)-S(8)-aminomethyldihydrolipoyl]-L-lysyl-[glycine-cleavage complex H protein] + CO2</text>
        <dbReference type="Rhea" id="RHEA:24304"/>
        <dbReference type="Rhea" id="RHEA-COMP:10494"/>
        <dbReference type="Rhea" id="RHEA-COMP:10495"/>
        <dbReference type="ChEBI" id="CHEBI:15378"/>
        <dbReference type="ChEBI" id="CHEBI:16526"/>
        <dbReference type="ChEBI" id="CHEBI:57305"/>
        <dbReference type="ChEBI" id="CHEBI:83099"/>
        <dbReference type="ChEBI" id="CHEBI:83143"/>
        <dbReference type="EC" id="1.4.4.2"/>
    </reaction>
</comment>
<comment type="cofactor">
    <cofactor evidence="1">
        <name>pyridoxal 5'-phosphate</name>
        <dbReference type="ChEBI" id="CHEBI:597326"/>
    </cofactor>
</comment>
<comment type="subunit">
    <text evidence="1">The glycine cleavage system is composed of four proteins: P, T, L and H. In this organism, the P 'protein' is a heterodimer of two subunits.</text>
</comment>
<comment type="similarity">
    <text evidence="1">Belongs to the GcvP family. C-terminal subunit subfamily.</text>
</comment>